<organism>
    <name type="scientific">Salmonella paratyphi B (strain ATCC BAA-1250 / SPB7)</name>
    <dbReference type="NCBI Taxonomy" id="1016998"/>
    <lineage>
        <taxon>Bacteria</taxon>
        <taxon>Pseudomonadati</taxon>
        <taxon>Pseudomonadota</taxon>
        <taxon>Gammaproteobacteria</taxon>
        <taxon>Enterobacterales</taxon>
        <taxon>Enterobacteriaceae</taxon>
        <taxon>Salmonella</taxon>
    </lineage>
</organism>
<gene>
    <name evidence="1" type="primary">iraP</name>
    <name type="ordered locus">SPAB_03208</name>
</gene>
<dbReference type="EMBL" id="CP000886">
    <property type="protein sequence ID" value="ABX68569.1"/>
    <property type="molecule type" value="Genomic_DNA"/>
</dbReference>
<dbReference type="RefSeq" id="WP_001518423.1">
    <property type="nucleotide sequence ID" value="NC_010102.1"/>
</dbReference>
<dbReference type="SMR" id="A9MX56"/>
<dbReference type="KEGG" id="spq:SPAB_03208"/>
<dbReference type="PATRIC" id="fig|1016998.12.peg.3028"/>
<dbReference type="HOGENOM" id="CLU_169517_0_0_6"/>
<dbReference type="Proteomes" id="UP000008556">
    <property type="component" value="Chromosome"/>
</dbReference>
<dbReference type="GO" id="GO:0005737">
    <property type="term" value="C:cytoplasm"/>
    <property type="evidence" value="ECO:0007669"/>
    <property type="project" value="UniProtKB-SubCell"/>
</dbReference>
<dbReference type="GO" id="GO:0009267">
    <property type="term" value="P:cellular response to starvation"/>
    <property type="evidence" value="ECO:0007669"/>
    <property type="project" value="UniProtKB-UniRule"/>
</dbReference>
<dbReference type="HAMAP" id="MF_01198">
    <property type="entry name" value="Anti_adapt_IraP"/>
    <property type="match status" value="1"/>
</dbReference>
<dbReference type="InterPro" id="IPR019732">
    <property type="entry name" value="SigmaS_Anti-adapt_IraP"/>
</dbReference>
<dbReference type="NCBIfam" id="NF007598">
    <property type="entry name" value="PRK10244.1"/>
    <property type="match status" value="1"/>
</dbReference>
<dbReference type="Pfam" id="PF10796">
    <property type="entry name" value="Anti-adapt_IraP"/>
    <property type="match status" value="1"/>
</dbReference>
<protein>
    <recommendedName>
        <fullName evidence="1">Anti-adapter protein IraP</fullName>
    </recommendedName>
</protein>
<feature type="chain" id="PRO_0000337861" description="Anti-adapter protein IraP">
    <location>
        <begin position="1"/>
        <end position="86"/>
    </location>
</feature>
<feature type="coiled-coil region" evidence="1">
    <location>
        <begin position="1"/>
        <end position="36"/>
    </location>
</feature>
<sequence>MKNLIAELLLKLAQKEEESKELVAQVEALEIIVTAMLRNMAQNEQEMLIRQVEGALEGVKPDASVPDHDTELLRQYVKKLLRHPRH</sequence>
<proteinExistence type="inferred from homology"/>
<accession>A9MX56</accession>
<comment type="function">
    <text evidence="1">Inhibits RpoS proteolysis by regulating RssB activity, thereby increasing the stability of the sigma stress factor RpoS especially during phosphate and magnesium starvation, but also in stationary phase and during nitrogen starvation. Its effect on RpoS stability is due to its interaction with RssB, which probably blocks the interaction of RssB with RpoS, and the consequent delivery of the RssB-RpoS complex to the ClpXP protein degradation pathway.</text>
</comment>
<comment type="subunit">
    <text evidence="1">Interacts with RssB.</text>
</comment>
<comment type="subcellular location">
    <subcellularLocation>
        <location evidence="1">Cytoplasm</location>
    </subcellularLocation>
</comment>
<comment type="similarity">
    <text evidence="1">Belongs to the IraP family.</text>
</comment>
<evidence type="ECO:0000255" key="1">
    <source>
        <dbReference type="HAMAP-Rule" id="MF_01198"/>
    </source>
</evidence>
<reference key="1">
    <citation type="submission" date="2007-11" db="EMBL/GenBank/DDBJ databases">
        <authorList>
            <consortium name="The Salmonella enterica serovar Paratyphi B Genome Sequencing Project"/>
            <person name="McClelland M."/>
            <person name="Sanderson E.K."/>
            <person name="Porwollik S."/>
            <person name="Spieth J."/>
            <person name="Clifton W.S."/>
            <person name="Fulton R."/>
            <person name="Cordes M."/>
            <person name="Wollam A."/>
            <person name="Shah N."/>
            <person name="Pepin K."/>
            <person name="Bhonagiri V."/>
            <person name="Nash W."/>
            <person name="Johnson M."/>
            <person name="Thiruvilangam P."/>
            <person name="Wilson R."/>
        </authorList>
    </citation>
    <scope>NUCLEOTIDE SEQUENCE [LARGE SCALE GENOMIC DNA]</scope>
    <source>
        <strain>ATCC BAA-1250 / SPB7</strain>
    </source>
</reference>
<name>IRAP_SALPB</name>
<keyword id="KW-0175">Coiled coil</keyword>
<keyword id="KW-0963">Cytoplasm</keyword>
<keyword id="KW-0346">Stress response</keyword>